<gene>
    <name type="primary">TPT1</name>
</gene>
<protein>
    <recommendedName>
        <fullName>Translationally-controlled tumor protein</fullName>
        <shortName>TCTP</shortName>
    </recommendedName>
</protein>
<name>TCTP_BOVIN</name>
<accession>Q5E984</accession>
<accession>Q3SX12</accession>
<accession>Q862G3</accession>
<accession>Q862H4</accession>
<accession>Q862N1</accession>
<accession>Q862X2</accession>
<accession>Q862Y4</accession>
<sequence>MIIYRDLISHDEMFSDIYKIREVADGLCLEVEGKMVSRTEGNIDDSLIGGNASAEGPEGEGTESTVITGVDIVMNHHLQETSFTKEAYKKYIKDYMKSIKGKLEEQRPERVKPFMTGAAEQIKHILANFKNYQFFIGENMNPDGMVALLDYREDGVTPYMIFFKDGLEMEKC</sequence>
<reference key="1">
    <citation type="journal article" date="2005" name="BMC Genomics">
        <title>Characterization of 954 bovine full-CDS cDNA sequences.</title>
        <authorList>
            <person name="Harhay G.P."/>
            <person name="Sonstegard T.S."/>
            <person name="Keele J.W."/>
            <person name="Heaton M.P."/>
            <person name="Clawson M.L."/>
            <person name="Snelling W.M."/>
            <person name="Wiedmann R.T."/>
            <person name="Van Tassell C.P."/>
            <person name="Smith T.P.L."/>
        </authorList>
    </citation>
    <scope>NUCLEOTIDE SEQUENCE [LARGE SCALE MRNA]</scope>
</reference>
<reference key="2">
    <citation type="submission" date="2005-09" db="EMBL/GenBank/DDBJ databases">
        <authorList>
            <consortium name="NIH - Mammalian Gene Collection (MGC) project"/>
        </authorList>
    </citation>
    <scope>NUCLEOTIDE SEQUENCE [LARGE SCALE MRNA]</scope>
    <source>
        <strain>Crossbred X Angus</strain>
        <tissue>Ileum</tissue>
    </source>
</reference>
<reference key="3">
    <citation type="journal article" date="2003" name="Mol. Reprod. Dev.">
        <title>Characterization of gene expression profiles in early bovine pregnancy using a custom cDNA microarray.</title>
        <authorList>
            <person name="Ishiwata H."/>
            <person name="Katsuma S."/>
            <person name="Kizaki K."/>
            <person name="Patel O.V."/>
            <person name="Nakano H."/>
            <person name="Takahashi T."/>
            <person name="Imai K."/>
            <person name="Hirasawa A."/>
            <person name="Shiojima S."/>
            <person name="Ikawa H."/>
            <person name="Suzuki Y."/>
            <person name="Tsujimoto G."/>
            <person name="Izaike Y."/>
            <person name="Todoroki J."/>
            <person name="Hashizume K."/>
        </authorList>
    </citation>
    <scope>NUCLEOTIDE SEQUENCE [LARGE SCALE MRNA] OF 1-155</scope>
</reference>
<evidence type="ECO:0000250" key="1">
    <source>
        <dbReference type="UniProtKB" id="P13693"/>
    </source>
</evidence>
<evidence type="ECO:0000250" key="2">
    <source>
        <dbReference type="UniProtKB" id="P63029"/>
    </source>
</evidence>
<evidence type="ECO:0000255" key="3">
    <source>
        <dbReference type="PROSITE-ProRule" id="PRU01133"/>
    </source>
</evidence>
<evidence type="ECO:0000305" key="4"/>
<proteinExistence type="evidence at transcript level"/>
<feature type="chain" id="PRO_0000211267" description="Translationally-controlled tumor protein">
    <location>
        <begin position="1"/>
        <end position="172"/>
    </location>
</feature>
<feature type="domain" description="TCTP" evidence="3">
    <location>
        <begin position="1"/>
        <end position="172"/>
    </location>
</feature>
<feature type="region of interest" description="Required for reduction of TSC22D1 protein stability" evidence="1">
    <location>
        <begin position="70"/>
        <end position="172"/>
    </location>
</feature>
<feature type="modified residue" description="Phosphoserine; by PLK1" evidence="1">
    <location>
        <position position="46"/>
    </location>
</feature>
<feature type="modified residue" description="Phosphoserine" evidence="1">
    <location>
        <position position="53"/>
    </location>
</feature>
<feature type="modified residue" description="Phosphoserine; by PLK1" evidence="1">
    <location>
        <position position="64"/>
    </location>
</feature>
<organism>
    <name type="scientific">Bos taurus</name>
    <name type="common">Bovine</name>
    <dbReference type="NCBI Taxonomy" id="9913"/>
    <lineage>
        <taxon>Eukaryota</taxon>
        <taxon>Metazoa</taxon>
        <taxon>Chordata</taxon>
        <taxon>Craniata</taxon>
        <taxon>Vertebrata</taxon>
        <taxon>Euteleostomi</taxon>
        <taxon>Mammalia</taxon>
        <taxon>Eutheria</taxon>
        <taxon>Laurasiatheria</taxon>
        <taxon>Artiodactyla</taxon>
        <taxon>Ruminantia</taxon>
        <taxon>Pecora</taxon>
        <taxon>Bovidae</taxon>
        <taxon>Bovinae</taxon>
        <taxon>Bos</taxon>
    </lineage>
</organism>
<dbReference type="EMBL" id="BT021036">
    <property type="protein sequence ID" value="AAX09053.1"/>
    <property type="molecule type" value="mRNA"/>
</dbReference>
<dbReference type="EMBL" id="BC104562">
    <property type="protein sequence ID" value="AAI04563.1"/>
    <property type="molecule type" value="mRNA"/>
</dbReference>
<dbReference type="EMBL" id="AB098949">
    <property type="protein sequence ID" value="BAC56439.1"/>
    <property type="status" value="ALT_FRAME"/>
    <property type="molecule type" value="mRNA"/>
</dbReference>
<dbReference type="EMBL" id="AB099016">
    <property type="protein sequence ID" value="BAC56506.1"/>
    <property type="status" value="ALT_FRAME"/>
    <property type="molecule type" value="mRNA"/>
</dbReference>
<dbReference type="EMBL" id="AB099031">
    <property type="protein sequence ID" value="BAC56521.1"/>
    <property type="molecule type" value="mRNA"/>
</dbReference>
<dbReference type="RefSeq" id="NP_001014410.1">
    <property type="nucleotide sequence ID" value="NM_001014388.1"/>
</dbReference>
<dbReference type="BMRB" id="Q5E984"/>
<dbReference type="SMR" id="Q5E984"/>
<dbReference type="FunCoup" id="Q5E984">
    <property type="interactions" value="2215"/>
</dbReference>
<dbReference type="STRING" id="9913.ENSBTAP00000013402"/>
<dbReference type="PaxDb" id="9913-ENSBTAP00000013402"/>
<dbReference type="PeptideAtlas" id="Q5E984"/>
<dbReference type="GeneID" id="326599"/>
<dbReference type="KEGG" id="bta:326599"/>
<dbReference type="CTD" id="7178"/>
<dbReference type="eggNOG" id="KOG1727">
    <property type="taxonomic scope" value="Eukaryota"/>
</dbReference>
<dbReference type="HOGENOM" id="CLU_095877_0_1_1"/>
<dbReference type="InParanoid" id="Q5E984"/>
<dbReference type="OrthoDB" id="9691754at2759"/>
<dbReference type="TreeFam" id="TF300238"/>
<dbReference type="Proteomes" id="UP000009136">
    <property type="component" value="Unplaced"/>
</dbReference>
<dbReference type="GO" id="GO:0005737">
    <property type="term" value="C:cytoplasm"/>
    <property type="evidence" value="ECO:0000250"/>
    <property type="project" value="AgBase"/>
</dbReference>
<dbReference type="GO" id="GO:0005881">
    <property type="term" value="C:cytoplasmic microtubule"/>
    <property type="evidence" value="ECO:0000250"/>
    <property type="project" value="AgBase"/>
</dbReference>
<dbReference type="GO" id="GO:0005615">
    <property type="term" value="C:extracellular space"/>
    <property type="evidence" value="ECO:0000250"/>
    <property type="project" value="AgBase"/>
</dbReference>
<dbReference type="GO" id="GO:0005771">
    <property type="term" value="C:multivesicular body"/>
    <property type="evidence" value="ECO:0000250"/>
    <property type="project" value="AgBase"/>
</dbReference>
<dbReference type="GO" id="GO:0000922">
    <property type="term" value="C:spindle pole"/>
    <property type="evidence" value="ECO:0000250"/>
    <property type="project" value="UniProtKB"/>
</dbReference>
<dbReference type="GO" id="GO:0005509">
    <property type="term" value="F:calcium ion binding"/>
    <property type="evidence" value="ECO:0000250"/>
    <property type="project" value="AgBase"/>
</dbReference>
<dbReference type="FunFam" id="2.170.150.10:FF:000001">
    <property type="entry name" value="Tumor protein, translationally-controlled 1"/>
    <property type="match status" value="1"/>
</dbReference>
<dbReference type="Gene3D" id="2.170.150.10">
    <property type="entry name" value="Metal Binding Protein, Guanine Nucleotide Exchange Factor, Chain A"/>
    <property type="match status" value="1"/>
</dbReference>
<dbReference type="InterPro" id="IPR011057">
    <property type="entry name" value="Mss4-like_sf"/>
</dbReference>
<dbReference type="InterPro" id="IPR011323">
    <property type="entry name" value="Mss4/transl-control_tumour"/>
</dbReference>
<dbReference type="InterPro" id="IPR034737">
    <property type="entry name" value="TCTP"/>
</dbReference>
<dbReference type="InterPro" id="IPR018103">
    <property type="entry name" value="Translation_control_tumour_CS"/>
</dbReference>
<dbReference type="InterPro" id="IPR018105">
    <property type="entry name" value="Translational_control_tumour_p"/>
</dbReference>
<dbReference type="PANTHER" id="PTHR11991">
    <property type="entry name" value="TRANSLATIONALLY CONTROLLED TUMOR PROTEIN-RELATED"/>
    <property type="match status" value="1"/>
</dbReference>
<dbReference type="PANTHER" id="PTHR11991:SF0">
    <property type="entry name" value="TRANSLATIONALLY-CONTROLLED TUMOR PROTEIN"/>
    <property type="match status" value="1"/>
</dbReference>
<dbReference type="Pfam" id="PF00838">
    <property type="entry name" value="TCTP"/>
    <property type="match status" value="1"/>
</dbReference>
<dbReference type="PRINTS" id="PR01653">
    <property type="entry name" value="TCTPROTEIN"/>
</dbReference>
<dbReference type="SUPFAM" id="SSF51316">
    <property type="entry name" value="Mss4-like"/>
    <property type="match status" value="1"/>
</dbReference>
<dbReference type="PROSITE" id="PS01002">
    <property type="entry name" value="TCTP_1"/>
    <property type="match status" value="1"/>
</dbReference>
<dbReference type="PROSITE" id="PS01003">
    <property type="entry name" value="TCTP_2"/>
    <property type="match status" value="1"/>
</dbReference>
<dbReference type="PROSITE" id="PS51797">
    <property type="entry name" value="TCTP_3"/>
    <property type="match status" value="1"/>
</dbReference>
<keyword id="KW-0106">Calcium</keyword>
<keyword id="KW-0963">Cytoplasm</keyword>
<keyword id="KW-0597">Phosphoprotein</keyword>
<keyword id="KW-1185">Reference proteome</keyword>
<comment type="function">
    <text evidence="1">Involved in calcium binding and microtubule stabilization (By similarity). Acts as a negative regulator of TSC22D1-mediated apoptosis, via interaction with and destabilization of TSC22D1 protein (By similarity).</text>
</comment>
<comment type="subunit">
    <text evidence="1 2">Homodimer (By similarity). Interacts with STEAP3 (By similarity). Interacts with TSC22D1; interaction results in the destabilization of TSC22D1 protein (By similarity).</text>
</comment>
<comment type="subcellular location">
    <subcellularLocation>
        <location evidence="1">Cytoplasm</location>
    </subcellularLocation>
</comment>
<comment type="similarity">
    <text evidence="3">Belongs to the TCTP family.</text>
</comment>
<comment type="sequence caution" evidence="4">
    <conflict type="frameshift">
        <sequence resource="EMBL-CDS" id="BAC56439"/>
    </conflict>
</comment>
<comment type="sequence caution" evidence="4">
    <conflict type="frameshift">
        <sequence resource="EMBL-CDS" id="BAC56506"/>
    </conflict>
</comment>